<proteinExistence type="inferred from homology"/>
<geneLocation type="chloroplast"/>
<name>RR12_PANGI</name>
<gene>
    <name type="primary">rps12-A</name>
    <name type="ORF">PSC0716</name>
</gene>
<gene>
    <name type="primary">rps12-B</name>
</gene>
<keyword id="KW-0150">Chloroplast</keyword>
<keyword id="KW-0934">Plastid</keyword>
<keyword id="KW-0687">Ribonucleoprotein</keyword>
<keyword id="KW-0689">Ribosomal protein</keyword>
<keyword id="KW-0694">RNA-binding</keyword>
<keyword id="KW-0699">rRNA-binding</keyword>
<comment type="function">
    <text evidence="1">With S4 and S5 plays an important role in translational accuracy. Located at the interface of the 30S and 50S subunits (By similarity).</text>
</comment>
<comment type="subunit">
    <text evidence="1">Part of the 30S ribosomal subunit.</text>
</comment>
<comment type="subcellular location">
    <subcellularLocation>
        <location>Plastid</location>
        <location>Chloroplast</location>
    </subcellularLocation>
</comment>
<comment type="similarity">
    <text evidence="3">Belongs to the universal ribosomal protein uS12 family.</text>
</comment>
<feature type="chain" id="PRO_0000146416" description="Small ribosomal subunit protein uS12cz/uS12cy">
    <location>
        <begin position="1"/>
        <end position="123"/>
    </location>
</feature>
<organism>
    <name type="scientific">Panax ginseng</name>
    <name type="common">Korean ginseng</name>
    <dbReference type="NCBI Taxonomy" id="4054"/>
    <lineage>
        <taxon>Eukaryota</taxon>
        <taxon>Viridiplantae</taxon>
        <taxon>Streptophyta</taxon>
        <taxon>Embryophyta</taxon>
        <taxon>Tracheophyta</taxon>
        <taxon>Spermatophyta</taxon>
        <taxon>Magnoliopsida</taxon>
        <taxon>eudicotyledons</taxon>
        <taxon>Gunneridae</taxon>
        <taxon>Pentapetalae</taxon>
        <taxon>asterids</taxon>
        <taxon>campanulids</taxon>
        <taxon>Apiales</taxon>
        <taxon>Araliaceae</taxon>
        <taxon>Panax</taxon>
    </lineage>
</organism>
<protein>
    <recommendedName>
        <fullName evidence="2">Small ribosomal subunit protein uS12cz/uS12cy</fullName>
    </recommendedName>
    <alternativeName>
        <fullName evidence="3">30S ribosomal protein S12, chloroplastic</fullName>
    </alternativeName>
</protein>
<sequence length="123" mass="13738">MPTIKQLIRNTRQPIRNVTKSPALRGCPQRRGTCTRVYTITPKKPNSALRKVARVRLTSGFEITAYIPGIGHNSQEHSVVLVRGGRVKDLPGVRYHIVRGTLDAVGVKDRQQGRSKYGVKKPK</sequence>
<dbReference type="EMBL" id="AY582139">
    <property type="protein sequence ID" value="AAT98556.1"/>
    <property type="molecule type" value="Genomic_DNA"/>
</dbReference>
<dbReference type="EMBL" id="AY582139">
    <property type="protein sequence ID" value="AAT98569.1"/>
    <property type="molecule type" value="Genomic_DNA"/>
</dbReference>
<dbReference type="SMR" id="Q68S28"/>
<dbReference type="GO" id="GO:0009507">
    <property type="term" value="C:chloroplast"/>
    <property type="evidence" value="ECO:0007669"/>
    <property type="project" value="UniProtKB-SubCell"/>
</dbReference>
<dbReference type="GO" id="GO:0015935">
    <property type="term" value="C:small ribosomal subunit"/>
    <property type="evidence" value="ECO:0007669"/>
    <property type="project" value="InterPro"/>
</dbReference>
<dbReference type="GO" id="GO:0019843">
    <property type="term" value="F:rRNA binding"/>
    <property type="evidence" value="ECO:0007669"/>
    <property type="project" value="UniProtKB-UniRule"/>
</dbReference>
<dbReference type="GO" id="GO:0003735">
    <property type="term" value="F:structural constituent of ribosome"/>
    <property type="evidence" value="ECO:0007669"/>
    <property type="project" value="InterPro"/>
</dbReference>
<dbReference type="GO" id="GO:0006412">
    <property type="term" value="P:translation"/>
    <property type="evidence" value="ECO:0007669"/>
    <property type="project" value="UniProtKB-UniRule"/>
</dbReference>
<dbReference type="CDD" id="cd03368">
    <property type="entry name" value="Ribosomal_S12"/>
    <property type="match status" value="1"/>
</dbReference>
<dbReference type="FunFam" id="2.40.50.140:FF:000008">
    <property type="entry name" value="30S ribosomal protein S12, chloroplastic"/>
    <property type="match status" value="1"/>
</dbReference>
<dbReference type="Gene3D" id="2.40.50.140">
    <property type="entry name" value="Nucleic acid-binding proteins"/>
    <property type="match status" value="1"/>
</dbReference>
<dbReference type="HAMAP" id="MF_00403_B">
    <property type="entry name" value="Ribosomal_uS12_B"/>
    <property type="match status" value="1"/>
</dbReference>
<dbReference type="InterPro" id="IPR012340">
    <property type="entry name" value="NA-bd_OB-fold"/>
</dbReference>
<dbReference type="InterPro" id="IPR006032">
    <property type="entry name" value="Ribosomal_uS12"/>
</dbReference>
<dbReference type="InterPro" id="IPR005679">
    <property type="entry name" value="Ribosomal_uS12_bac"/>
</dbReference>
<dbReference type="NCBIfam" id="TIGR00981">
    <property type="entry name" value="rpsL_bact"/>
    <property type="match status" value="1"/>
</dbReference>
<dbReference type="PANTHER" id="PTHR11652">
    <property type="entry name" value="30S RIBOSOMAL PROTEIN S12 FAMILY MEMBER"/>
    <property type="match status" value="1"/>
</dbReference>
<dbReference type="Pfam" id="PF00164">
    <property type="entry name" value="Ribosom_S12_S23"/>
    <property type="match status" value="1"/>
</dbReference>
<dbReference type="PIRSF" id="PIRSF002133">
    <property type="entry name" value="Ribosomal_S12/S23"/>
    <property type="match status" value="1"/>
</dbReference>
<dbReference type="PRINTS" id="PR01034">
    <property type="entry name" value="RIBOSOMALS12"/>
</dbReference>
<dbReference type="SUPFAM" id="SSF50249">
    <property type="entry name" value="Nucleic acid-binding proteins"/>
    <property type="match status" value="1"/>
</dbReference>
<dbReference type="PROSITE" id="PS00055">
    <property type="entry name" value="RIBOSOMAL_S12"/>
    <property type="match status" value="1"/>
</dbReference>
<evidence type="ECO:0000250" key="1"/>
<evidence type="ECO:0000255" key="2">
    <source>
        <dbReference type="HAMAP-Rule" id="MF_00403"/>
    </source>
</evidence>
<evidence type="ECO:0000305" key="3"/>
<accession>Q68S28</accession>
<reference key="1">
    <citation type="journal article" date="2004" name="DNA Res.">
        <title>Complete chloroplast genome sequence from Korea ginseng (Panax schinseng Nees) and comparative analysis of sequence evolution among 17 vascular plants.</title>
        <authorList>
            <person name="Kim K.-J."/>
            <person name="Lee H.-L."/>
        </authorList>
    </citation>
    <scope>NUCLEOTIDE SEQUENCE [LARGE SCALE GENOMIC DNA]</scope>
</reference>